<dbReference type="EMBL" id="CH954178">
    <property type="protein sequence ID" value="EDV52342.1"/>
    <property type="molecule type" value="Genomic_DNA"/>
</dbReference>
<dbReference type="SMR" id="B3NDY8"/>
<dbReference type="EnsemblMetazoa" id="FBtr0136080">
    <property type="protein sequence ID" value="FBpp0134572"/>
    <property type="gene ID" value="FBgn0108261"/>
</dbReference>
<dbReference type="EnsemblMetazoa" id="XM_001973280.3">
    <property type="protein sequence ID" value="XP_001973316.1"/>
    <property type="gene ID" value="LOC6543555"/>
</dbReference>
<dbReference type="GeneID" id="6543555"/>
<dbReference type="KEGG" id="der:6543555"/>
<dbReference type="eggNOG" id="KOG3420">
    <property type="taxonomic scope" value="Eukaryota"/>
</dbReference>
<dbReference type="HOGENOM" id="CLU_145773_0_0_1"/>
<dbReference type="OMA" id="VMETQHM"/>
<dbReference type="OrthoDB" id="419617at2759"/>
<dbReference type="PhylomeDB" id="B3NDY8"/>
<dbReference type="Proteomes" id="UP000008711">
    <property type="component" value="Unassembled WGS sequence"/>
</dbReference>
<dbReference type="GO" id="GO:0005654">
    <property type="term" value="C:nucleoplasm"/>
    <property type="evidence" value="ECO:0007669"/>
    <property type="project" value="TreeGrafter"/>
</dbReference>
<dbReference type="GO" id="GO:0070876">
    <property type="term" value="C:SOSS complex"/>
    <property type="evidence" value="ECO:0007669"/>
    <property type="project" value="InterPro"/>
</dbReference>
<dbReference type="GO" id="GO:0006281">
    <property type="term" value="P:DNA repair"/>
    <property type="evidence" value="ECO:0007669"/>
    <property type="project" value="InterPro"/>
</dbReference>
<dbReference type="InterPro" id="IPR031821">
    <property type="entry name" value="SOSSC"/>
</dbReference>
<dbReference type="PANTHER" id="PTHR31526">
    <property type="entry name" value="SOSS COMPLEX SUBUNIT C"/>
    <property type="match status" value="1"/>
</dbReference>
<dbReference type="PANTHER" id="PTHR31526:SF2">
    <property type="entry name" value="SOSS COMPLEX SUBUNIT C"/>
    <property type="match status" value="1"/>
</dbReference>
<dbReference type="Pfam" id="PF15925">
    <property type="entry name" value="SOSSC"/>
    <property type="match status" value="1"/>
</dbReference>
<comment type="similarity">
    <text evidence="2">Belongs to the SOSS-C family.</text>
</comment>
<feature type="chain" id="PRO_0000385320" description="SOSS complex subunit C homolog">
    <location>
        <begin position="1"/>
        <end position="129"/>
    </location>
</feature>
<feature type="region of interest" description="Disordered" evidence="1">
    <location>
        <begin position="105"/>
        <end position="129"/>
    </location>
</feature>
<evidence type="ECO:0000256" key="1">
    <source>
        <dbReference type="SAM" id="MobiDB-lite"/>
    </source>
</evidence>
<evidence type="ECO:0000305" key="2"/>
<proteinExistence type="inferred from homology"/>
<sequence>MAFPTTSAQQAETNRKILEEIQTKKQLLAGGIINLGLSPANQMPAPQLLGQPTTVNPDFQAGVGIATNATSTARSAFNPTSSTTLGFFIPQDSYFGNSFIPVLPRLEPLPSPATTPTTPNAPPSHNISK</sequence>
<accession>B3NDY8</accession>
<name>SOSSC_DROER</name>
<organism>
    <name type="scientific">Drosophila erecta</name>
    <name type="common">Fruit fly</name>
    <dbReference type="NCBI Taxonomy" id="7220"/>
    <lineage>
        <taxon>Eukaryota</taxon>
        <taxon>Metazoa</taxon>
        <taxon>Ecdysozoa</taxon>
        <taxon>Arthropoda</taxon>
        <taxon>Hexapoda</taxon>
        <taxon>Insecta</taxon>
        <taxon>Pterygota</taxon>
        <taxon>Neoptera</taxon>
        <taxon>Endopterygota</taxon>
        <taxon>Diptera</taxon>
        <taxon>Brachycera</taxon>
        <taxon>Muscomorpha</taxon>
        <taxon>Ephydroidea</taxon>
        <taxon>Drosophilidae</taxon>
        <taxon>Drosophila</taxon>
        <taxon>Sophophora</taxon>
    </lineage>
</organism>
<reference key="1">
    <citation type="journal article" date="2007" name="Nature">
        <title>Evolution of genes and genomes on the Drosophila phylogeny.</title>
        <authorList>
            <consortium name="Drosophila 12 genomes consortium"/>
        </authorList>
    </citation>
    <scope>NUCLEOTIDE SEQUENCE [LARGE SCALE GENOMIC DNA]</scope>
    <source>
        <strain>Tucson 14021-0224.01</strain>
    </source>
</reference>
<gene>
    <name type="ORF">GG16026</name>
</gene>
<protein>
    <recommendedName>
        <fullName>SOSS complex subunit C homolog</fullName>
    </recommendedName>
</protein>